<gene>
    <name type="primary">CRF4</name>
    <name type="synonym">ERF066</name>
    <name type="ordered locus">At4g27950</name>
    <name type="ORF">T13J8.60</name>
</gene>
<keyword id="KW-0010">Activator</keyword>
<keyword id="KW-0932">Cytokinin signaling pathway</keyword>
<keyword id="KW-0963">Cytoplasm</keyword>
<keyword id="KW-0238">DNA-binding</keyword>
<keyword id="KW-0936">Ethylene signaling pathway</keyword>
<keyword id="KW-0539">Nucleus</keyword>
<keyword id="KW-1185">Reference proteome</keyword>
<keyword id="KW-0804">Transcription</keyword>
<keyword id="KW-0805">Transcription regulation</keyword>
<reference key="1">
    <citation type="journal article" date="1999" name="Nature">
        <title>Sequence and analysis of chromosome 4 of the plant Arabidopsis thaliana.</title>
        <authorList>
            <person name="Mayer K.F.X."/>
            <person name="Schueller C."/>
            <person name="Wambutt R."/>
            <person name="Murphy G."/>
            <person name="Volckaert G."/>
            <person name="Pohl T."/>
            <person name="Duesterhoeft A."/>
            <person name="Stiekema W."/>
            <person name="Entian K.-D."/>
            <person name="Terryn N."/>
            <person name="Harris B."/>
            <person name="Ansorge W."/>
            <person name="Brandt P."/>
            <person name="Grivell L.A."/>
            <person name="Rieger M."/>
            <person name="Weichselgartner M."/>
            <person name="de Simone V."/>
            <person name="Obermaier B."/>
            <person name="Mache R."/>
            <person name="Mueller M."/>
            <person name="Kreis M."/>
            <person name="Delseny M."/>
            <person name="Puigdomenech P."/>
            <person name="Watson M."/>
            <person name="Schmidtheini T."/>
            <person name="Reichert B."/>
            <person name="Portetelle D."/>
            <person name="Perez-Alonso M."/>
            <person name="Boutry M."/>
            <person name="Bancroft I."/>
            <person name="Vos P."/>
            <person name="Hoheisel J."/>
            <person name="Zimmermann W."/>
            <person name="Wedler H."/>
            <person name="Ridley P."/>
            <person name="Langham S.-A."/>
            <person name="McCullagh B."/>
            <person name="Bilham L."/>
            <person name="Robben J."/>
            <person name="van der Schueren J."/>
            <person name="Grymonprez B."/>
            <person name="Chuang Y.-J."/>
            <person name="Vandenbussche F."/>
            <person name="Braeken M."/>
            <person name="Weltjens I."/>
            <person name="Voet M."/>
            <person name="Bastiaens I."/>
            <person name="Aert R."/>
            <person name="Defoor E."/>
            <person name="Weitzenegger T."/>
            <person name="Bothe G."/>
            <person name="Ramsperger U."/>
            <person name="Hilbert H."/>
            <person name="Braun M."/>
            <person name="Holzer E."/>
            <person name="Brandt A."/>
            <person name="Peters S."/>
            <person name="van Staveren M."/>
            <person name="Dirkse W."/>
            <person name="Mooijman P."/>
            <person name="Klein Lankhorst R."/>
            <person name="Rose M."/>
            <person name="Hauf J."/>
            <person name="Koetter P."/>
            <person name="Berneiser S."/>
            <person name="Hempel S."/>
            <person name="Feldpausch M."/>
            <person name="Lamberth S."/>
            <person name="Van den Daele H."/>
            <person name="De Keyser A."/>
            <person name="Buysshaert C."/>
            <person name="Gielen J."/>
            <person name="Villarroel R."/>
            <person name="De Clercq R."/>
            <person name="van Montagu M."/>
            <person name="Rogers J."/>
            <person name="Cronin A."/>
            <person name="Quail M.A."/>
            <person name="Bray-Allen S."/>
            <person name="Clark L."/>
            <person name="Doggett J."/>
            <person name="Hall S."/>
            <person name="Kay M."/>
            <person name="Lennard N."/>
            <person name="McLay K."/>
            <person name="Mayes R."/>
            <person name="Pettett A."/>
            <person name="Rajandream M.A."/>
            <person name="Lyne M."/>
            <person name="Benes V."/>
            <person name="Rechmann S."/>
            <person name="Borkova D."/>
            <person name="Bloecker H."/>
            <person name="Scharfe M."/>
            <person name="Grimm M."/>
            <person name="Loehnert T.-H."/>
            <person name="Dose S."/>
            <person name="de Haan M."/>
            <person name="Maarse A.C."/>
            <person name="Schaefer M."/>
            <person name="Mueller-Auer S."/>
            <person name="Gabel C."/>
            <person name="Fuchs M."/>
            <person name="Fartmann B."/>
            <person name="Granderath K."/>
            <person name="Dauner D."/>
            <person name="Herzl A."/>
            <person name="Neumann S."/>
            <person name="Argiriou A."/>
            <person name="Vitale D."/>
            <person name="Liguori R."/>
            <person name="Piravandi E."/>
            <person name="Massenet O."/>
            <person name="Quigley F."/>
            <person name="Clabauld G."/>
            <person name="Muendlein A."/>
            <person name="Felber R."/>
            <person name="Schnabl S."/>
            <person name="Hiller R."/>
            <person name="Schmidt W."/>
            <person name="Lecharny A."/>
            <person name="Aubourg S."/>
            <person name="Chefdor F."/>
            <person name="Cooke R."/>
            <person name="Berger C."/>
            <person name="Monfort A."/>
            <person name="Casacuberta E."/>
            <person name="Gibbons T."/>
            <person name="Weber N."/>
            <person name="Vandenbol M."/>
            <person name="Bargues M."/>
            <person name="Terol J."/>
            <person name="Torres A."/>
            <person name="Perez-Perez A."/>
            <person name="Purnelle B."/>
            <person name="Bent E."/>
            <person name="Johnson S."/>
            <person name="Tacon D."/>
            <person name="Jesse T."/>
            <person name="Heijnen L."/>
            <person name="Schwarz S."/>
            <person name="Scholler P."/>
            <person name="Heber S."/>
            <person name="Francs P."/>
            <person name="Bielke C."/>
            <person name="Frishman D."/>
            <person name="Haase D."/>
            <person name="Lemcke K."/>
            <person name="Mewes H.-W."/>
            <person name="Stocker S."/>
            <person name="Zaccaria P."/>
            <person name="Bevan M."/>
            <person name="Wilson R.K."/>
            <person name="de la Bastide M."/>
            <person name="Habermann K."/>
            <person name="Parnell L."/>
            <person name="Dedhia N."/>
            <person name="Gnoj L."/>
            <person name="Schutz K."/>
            <person name="Huang E."/>
            <person name="Spiegel L."/>
            <person name="Sekhon M."/>
            <person name="Murray J."/>
            <person name="Sheet P."/>
            <person name="Cordes M."/>
            <person name="Abu-Threideh J."/>
            <person name="Stoneking T."/>
            <person name="Kalicki J."/>
            <person name="Graves T."/>
            <person name="Harmon G."/>
            <person name="Edwards J."/>
            <person name="Latreille P."/>
            <person name="Courtney L."/>
            <person name="Cloud J."/>
            <person name="Abbott A."/>
            <person name="Scott K."/>
            <person name="Johnson D."/>
            <person name="Minx P."/>
            <person name="Bentley D."/>
            <person name="Fulton B."/>
            <person name="Miller N."/>
            <person name="Greco T."/>
            <person name="Kemp K."/>
            <person name="Kramer J."/>
            <person name="Fulton L."/>
            <person name="Mardis E."/>
            <person name="Dante M."/>
            <person name="Pepin K."/>
            <person name="Hillier L.W."/>
            <person name="Nelson J."/>
            <person name="Spieth J."/>
            <person name="Ryan E."/>
            <person name="Andrews S."/>
            <person name="Geisel C."/>
            <person name="Layman D."/>
            <person name="Du H."/>
            <person name="Ali J."/>
            <person name="Berghoff A."/>
            <person name="Jones K."/>
            <person name="Drone K."/>
            <person name="Cotton M."/>
            <person name="Joshu C."/>
            <person name="Antonoiu B."/>
            <person name="Zidanic M."/>
            <person name="Strong C."/>
            <person name="Sun H."/>
            <person name="Lamar B."/>
            <person name="Yordan C."/>
            <person name="Ma P."/>
            <person name="Zhong J."/>
            <person name="Preston R."/>
            <person name="Vil D."/>
            <person name="Shekher M."/>
            <person name="Matero A."/>
            <person name="Shah R."/>
            <person name="Swaby I.K."/>
            <person name="O'Shaughnessy A."/>
            <person name="Rodriguez M."/>
            <person name="Hoffman J."/>
            <person name="Till S."/>
            <person name="Granat S."/>
            <person name="Shohdy N."/>
            <person name="Hasegawa A."/>
            <person name="Hameed A."/>
            <person name="Lodhi M."/>
            <person name="Johnson A."/>
            <person name="Chen E."/>
            <person name="Marra M.A."/>
            <person name="Martienssen R."/>
            <person name="McCombie W.R."/>
        </authorList>
    </citation>
    <scope>NUCLEOTIDE SEQUENCE [LARGE SCALE GENOMIC DNA]</scope>
    <source>
        <strain>cv. Columbia</strain>
    </source>
</reference>
<reference key="2">
    <citation type="journal article" date="2017" name="Plant J.">
        <title>Araport11: a complete reannotation of the Arabidopsis thaliana reference genome.</title>
        <authorList>
            <person name="Cheng C.Y."/>
            <person name="Krishnakumar V."/>
            <person name="Chan A.P."/>
            <person name="Thibaud-Nissen F."/>
            <person name="Schobel S."/>
            <person name="Town C.D."/>
        </authorList>
    </citation>
    <scope>GENOME REANNOTATION</scope>
    <source>
        <strain>cv. Columbia</strain>
    </source>
</reference>
<reference key="3">
    <citation type="submission" date="2008-06" db="EMBL/GenBank/DDBJ databases">
        <title>Arabidopsis ORF clones.</title>
        <authorList>
            <person name="De Los Reyes C."/>
            <person name="Quan R."/>
            <person name="Chen H."/>
            <person name="Bautista V.R."/>
            <person name="Kim C.J."/>
            <person name="Ecker J.R."/>
        </authorList>
    </citation>
    <scope>NUCLEOTIDE SEQUENCE [LARGE SCALE MRNA]</scope>
    <source>
        <strain>cv. Columbia</strain>
    </source>
</reference>
<reference key="4">
    <citation type="submission" date="2004-02" db="EMBL/GenBank/DDBJ databases">
        <title>Molecular cloning, expression, phylogenetic and functional characterization of the Arabidopsis AP2/EREBP transcription factor family.</title>
        <authorList>
            <person name="Pan Y."/>
            <person name="Gong W."/>
            <person name="Liu D."/>
            <person name="Fu Q."/>
            <person name="Mei W.-Q."/>
            <person name="Song W.-Q."/>
            <person name="Ma L.-G."/>
            <person name="Luo J.-C."/>
            <person name="Deng X.-W."/>
            <person name="Zhu Y.-X."/>
        </authorList>
    </citation>
    <scope>NUCLEOTIDE SEQUENCE [MRNA] OF 2-335</scope>
</reference>
<reference key="5">
    <citation type="journal article" date="2006" name="Proc. Natl. Acad. Sci. U.S.A.">
        <title>A subset of Arabidopsis AP2 transcription factors mediates cytokinin responses in concert with a two-component pathway.</title>
        <authorList>
            <person name="Rashotte A.M."/>
            <person name="Mason M.G."/>
            <person name="Hutchison C.E."/>
            <person name="Ferreira F.J."/>
            <person name="Schaller G.E."/>
            <person name="Kieber J.J."/>
        </authorList>
    </citation>
    <scope>FUNCTION</scope>
    <scope>SUBCELLULAR LOCATION</scope>
</reference>
<reference key="6">
    <citation type="journal article" date="2006" name="Plant Physiol.">
        <title>Genome-wide analysis of the ERF gene family in Arabidopsis and rice.</title>
        <authorList>
            <person name="Nakano T."/>
            <person name="Suzuki K."/>
            <person name="Fujimura T."/>
            <person name="Shinshi H."/>
        </authorList>
    </citation>
    <scope>GENE FAMILY</scope>
    <scope>NOMENCLATURE</scope>
</reference>
<organism>
    <name type="scientific">Arabidopsis thaliana</name>
    <name type="common">Mouse-ear cress</name>
    <dbReference type="NCBI Taxonomy" id="3702"/>
    <lineage>
        <taxon>Eukaryota</taxon>
        <taxon>Viridiplantae</taxon>
        <taxon>Streptophyta</taxon>
        <taxon>Embryophyta</taxon>
        <taxon>Tracheophyta</taxon>
        <taxon>Spermatophyta</taxon>
        <taxon>Magnoliopsida</taxon>
        <taxon>eudicotyledons</taxon>
        <taxon>Gunneridae</taxon>
        <taxon>Pentapetalae</taxon>
        <taxon>rosids</taxon>
        <taxon>malvids</taxon>
        <taxon>Brassicales</taxon>
        <taxon>Brassicaceae</taxon>
        <taxon>Camelineae</taxon>
        <taxon>Arabidopsis</taxon>
    </lineage>
</organism>
<dbReference type="EMBL" id="AL035524">
    <property type="protein sequence ID" value="CAB36764.1"/>
    <property type="status" value="ALT_INIT"/>
    <property type="molecule type" value="Genomic_DNA"/>
</dbReference>
<dbReference type="EMBL" id="AL161572">
    <property type="protein sequence ID" value="CAB79597.1"/>
    <property type="status" value="ALT_INIT"/>
    <property type="molecule type" value="Genomic_DNA"/>
</dbReference>
<dbReference type="EMBL" id="CP002687">
    <property type="protein sequence ID" value="AEE85412.1"/>
    <property type="molecule type" value="Genomic_DNA"/>
</dbReference>
<dbReference type="EMBL" id="BT033088">
    <property type="protein sequence ID" value="ACF04811.1"/>
    <property type="molecule type" value="mRNA"/>
</dbReference>
<dbReference type="EMBL" id="AY560872">
    <property type="protein sequence ID" value="AAT44939.1"/>
    <property type="molecule type" value="mRNA"/>
</dbReference>
<dbReference type="PIR" id="T02896">
    <property type="entry name" value="T02896"/>
</dbReference>
<dbReference type="RefSeq" id="NP_194524.2">
    <property type="nucleotide sequence ID" value="NM_118933.3"/>
</dbReference>
<dbReference type="SMR" id="Q9SUE3"/>
<dbReference type="BioGRID" id="14195">
    <property type="interactions" value="17"/>
</dbReference>
<dbReference type="FunCoup" id="Q9SUE3">
    <property type="interactions" value="62"/>
</dbReference>
<dbReference type="IntAct" id="Q9SUE3">
    <property type="interactions" value="17"/>
</dbReference>
<dbReference type="STRING" id="3702.Q9SUE3"/>
<dbReference type="PaxDb" id="3702-AT4G27950.1"/>
<dbReference type="EnsemblPlants" id="AT4G27950.1">
    <property type="protein sequence ID" value="AT4G27950.1"/>
    <property type="gene ID" value="AT4G27950"/>
</dbReference>
<dbReference type="GeneID" id="828908"/>
<dbReference type="Gramene" id="AT4G27950.1">
    <property type="protein sequence ID" value="AT4G27950.1"/>
    <property type="gene ID" value="AT4G27950"/>
</dbReference>
<dbReference type="KEGG" id="ath:AT4G27950"/>
<dbReference type="Araport" id="AT4G27950"/>
<dbReference type="TAIR" id="AT4G27950">
    <property type="gene designation" value="CRF4"/>
</dbReference>
<dbReference type="eggNOG" id="ENOG502R7AV">
    <property type="taxonomic scope" value="Eukaryota"/>
</dbReference>
<dbReference type="HOGENOM" id="CLU_062946_1_0_1"/>
<dbReference type="InParanoid" id="Q9SUE3"/>
<dbReference type="OMA" id="YVHEISI"/>
<dbReference type="PRO" id="PR:Q9SUE3"/>
<dbReference type="Proteomes" id="UP000006548">
    <property type="component" value="Chromosome 4"/>
</dbReference>
<dbReference type="ExpressionAtlas" id="Q9SUE3">
    <property type="expression patterns" value="baseline and differential"/>
</dbReference>
<dbReference type="GO" id="GO:0005737">
    <property type="term" value="C:cytoplasm"/>
    <property type="evidence" value="ECO:0007669"/>
    <property type="project" value="UniProtKB-SubCell"/>
</dbReference>
<dbReference type="GO" id="GO:0005634">
    <property type="term" value="C:nucleus"/>
    <property type="evidence" value="ECO:0007669"/>
    <property type="project" value="UniProtKB-SubCell"/>
</dbReference>
<dbReference type="GO" id="GO:0003677">
    <property type="term" value="F:DNA binding"/>
    <property type="evidence" value="ECO:0007669"/>
    <property type="project" value="UniProtKB-KW"/>
</dbReference>
<dbReference type="GO" id="GO:0003700">
    <property type="term" value="F:DNA-binding transcription factor activity"/>
    <property type="evidence" value="ECO:0000250"/>
    <property type="project" value="TAIR"/>
</dbReference>
<dbReference type="GO" id="GO:0009736">
    <property type="term" value="P:cytokinin-activated signaling pathway"/>
    <property type="evidence" value="ECO:0007669"/>
    <property type="project" value="UniProtKB-KW"/>
</dbReference>
<dbReference type="GO" id="GO:0009873">
    <property type="term" value="P:ethylene-activated signaling pathway"/>
    <property type="evidence" value="ECO:0007669"/>
    <property type="project" value="UniProtKB-KW"/>
</dbReference>
<dbReference type="GO" id="GO:0048366">
    <property type="term" value="P:leaf development"/>
    <property type="evidence" value="ECO:0000315"/>
    <property type="project" value="TAIR"/>
</dbReference>
<dbReference type="CDD" id="cd00018">
    <property type="entry name" value="AP2"/>
    <property type="match status" value="1"/>
</dbReference>
<dbReference type="FunFam" id="3.30.730.10:FF:000001">
    <property type="entry name" value="Ethylene-responsive transcription factor 2"/>
    <property type="match status" value="1"/>
</dbReference>
<dbReference type="Gene3D" id="3.30.730.10">
    <property type="entry name" value="AP2/ERF domain"/>
    <property type="match status" value="1"/>
</dbReference>
<dbReference type="InterPro" id="IPR001471">
    <property type="entry name" value="AP2/ERF_dom"/>
</dbReference>
<dbReference type="InterPro" id="IPR036955">
    <property type="entry name" value="AP2/ERF_dom_sf"/>
</dbReference>
<dbReference type="InterPro" id="IPR050913">
    <property type="entry name" value="AP2/ERF_ERF_subfamily"/>
</dbReference>
<dbReference type="InterPro" id="IPR016177">
    <property type="entry name" value="DNA-bd_dom_sf"/>
</dbReference>
<dbReference type="PANTHER" id="PTHR31194:SF117">
    <property type="entry name" value="ETHYLENE-RESPONSIVE TRANSCRIPTION FACTOR CRF3-RELATED"/>
    <property type="match status" value="1"/>
</dbReference>
<dbReference type="PANTHER" id="PTHR31194">
    <property type="entry name" value="SHN SHINE , DNA BINDING / TRANSCRIPTION FACTOR"/>
    <property type="match status" value="1"/>
</dbReference>
<dbReference type="Pfam" id="PF00847">
    <property type="entry name" value="AP2"/>
    <property type="match status" value="1"/>
</dbReference>
<dbReference type="PRINTS" id="PR00367">
    <property type="entry name" value="ETHRSPELEMNT"/>
</dbReference>
<dbReference type="SMART" id="SM00380">
    <property type="entry name" value="AP2"/>
    <property type="match status" value="1"/>
</dbReference>
<dbReference type="SUPFAM" id="SSF54171">
    <property type="entry name" value="DNA-binding domain"/>
    <property type="match status" value="1"/>
</dbReference>
<dbReference type="PROSITE" id="PS51032">
    <property type="entry name" value="AP2_ERF"/>
    <property type="match status" value="1"/>
</dbReference>
<evidence type="ECO:0000250" key="1"/>
<evidence type="ECO:0000255" key="2">
    <source>
        <dbReference type="PROSITE-ProRule" id="PRU00366"/>
    </source>
</evidence>
<evidence type="ECO:0000256" key="3">
    <source>
        <dbReference type="SAM" id="MobiDB-lite"/>
    </source>
</evidence>
<evidence type="ECO:0000269" key="4">
    <source>
    </source>
</evidence>
<evidence type="ECO:0000305" key="5"/>
<feature type="chain" id="PRO_0000297919" description="Ethylene-responsive transcription factor CRF4">
    <location>
        <begin position="1"/>
        <end position="335"/>
    </location>
</feature>
<feature type="DNA-binding region" description="AP2/ERF" evidence="2">
    <location>
        <begin position="117"/>
        <end position="174"/>
    </location>
</feature>
<feature type="region of interest" description="Disordered" evidence="3">
    <location>
        <begin position="78"/>
        <end position="121"/>
    </location>
</feature>
<feature type="region of interest" description="Disordered" evidence="3">
    <location>
        <begin position="175"/>
        <end position="209"/>
    </location>
</feature>
<feature type="compositionally biased region" description="Polar residues" evidence="3">
    <location>
        <begin position="80"/>
        <end position="92"/>
    </location>
</feature>
<feature type="compositionally biased region" description="Polar residues" evidence="3">
    <location>
        <begin position="101"/>
        <end position="115"/>
    </location>
</feature>
<proteinExistence type="evidence at protein level"/>
<comment type="function">
    <text evidence="1 4">Component of the cytokinin signaling pathway involved in cotyledons, leaves, and embryos development. Probably acts as a transcriptional activator. Binds to the GCC-box pathogenesis-related promoter element. May be involved in the regulation of gene expression by stress factors and by components of stress signal transduction pathways (By similarity).</text>
</comment>
<comment type="interaction">
    <interactant intactId="EBI-5567027">
        <id>Q9SUE3</id>
    </interactant>
    <interactant intactId="EBI-5567050">
        <id>O82503</id>
        <label>CRF1</label>
    </interactant>
    <organismsDiffer>false</organismsDiffer>
    <experiments>4</experiments>
</comment>
<comment type="interaction">
    <interactant intactId="EBI-5567027">
        <id>Q9SUE3</id>
    </interactant>
    <interactant intactId="EBI-5567273">
        <id>Q9SUQ2</id>
        <label>CRF2</label>
    </interactant>
    <organismsDiffer>false</organismsDiffer>
    <experiments>4</experiments>
</comment>
<comment type="interaction">
    <interactant intactId="EBI-5567027">
        <id>Q9SUE3</id>
    </interactant>
    <interactant intactId="EBI-5567993">
        <id>Q9FK12</id>
        <label>CRF3</label>
    </interactant>
    <organismsDiffer>false</organismsDiffer>
    <experiments>4</experiments>
</comment>
<comment type="interaction">
    <interactant intactId="EBI-5567027">
        <id>Q9SUE3</id>
    </interactant>
    <interactant intactId="EBI-5567180">
        <id>O82339</id>
        <label>CRF5</label>
    </interactant>
    <organismsDiffer>false</organismsDiffer>
    <experiments>4</experiments>
</comment>
<comment type="interaction">
    <interactant intactId="EBI-5567027">
        <id>Q9SUE3</id>
    </interactant>
    <interactant intactId="EBI-5568101">
        <id>Q9M374</id>
        <label>CRF6</label>
    </interactant>
    <organismsDiffer>false</organismsDiffer>
    <experiments>4</experiments>
</comment>
<comment type="interaction">
    <interactant intactId="EBI-5567027">
        <id>Q9SUE3</id>
    </interactant>
    <interactant intactId="EBI-5568301">
        <id>Q8W4I5</id>
        <label>ERF069</label>
    </interactant>
    <organismsDiffer>false</organismsDiffer>
    <experiments>3</experiments>
</comment>
<comment type="interaction">
    <interactant intactId="EBI-5567027">
        <id>Q9SUE3</id>
    </interactant>
    <interactant intactId="EBI-5568333">
        <id>Q9C995</id>
        <label>ERF070</label>
    </interactant>
    <organismsDiffer>false</organismsDiffer>
    <experiments>3</experiments>
</comment>
<comment type="subcellular location">
    <subcellularLocation>
        <location evidence="4">Cytoplasm</location>
    </subcellularLocation>
    <subcellularLocation>
        <location evidence="2 4">Nucleus</location>
    </subcellularLocation>
    <text>Relocalization from the cytoplasm into the nucleus is induced by cytokinins.</text>
</comment>
<comment type="similarity">
    <text evidence="5">Belongs to the AP2/ERF transcription factor family. ERF subfamily.</text>
</comment>
<comment type="sequence caution" evidence="5">
    <conflict type="erroneous initiation">
        <sequence resource="EMBL-CDS" id="CAB36764"/>
    </conflict>
    <text>Truncated N-terminus.</text>
</comment>
<comment type="sequence caution" evidence="5">
    <conflict type="erroneous initiation">
        <sequence resource="EMBL-CDS" id="CAB79597"/>
    </conflict>
    <text>Truncated N-terminus.</text>
</comment>
<protein>
    <recommendedName>
        <fullName>Ethylene-responsive transcription factor CRF4</fullName>
    </recommendedName>
    <alternativeName>
        <fullName>Protein CYTOKININ RESPONSE FACTOR 4</fullName>
    </alternativeName>
</protein>
<name>CRF4_ARATH</name>
<sequence length="335" mass="38448">MMMDEFMDLRPVKYTEHKTVIRKYTKKSSMERKTSVRDSARLVRVSMTDRDATDSSSDEEEFLFPRRRVKRLINEIRVEPSSSSTGDVSASPTKDRKRINVDSTVQKPSVSGQNQKKYRGVRQRPWGKWAAEIRDPEQRRRIWLGTFATAEEAAIVYDNAAIKLRGPDALTNFTVQPEPEPVQEQEQEPESNMSVSISESMDDSQHLSSPTSVLNYQTYVSEEPIDSLIKPVKQEFLEPEQEPISWHLGEGNTNTNDDSFPLDITFLDNYFNESLPDISIFDQPMSPIQPTENDFFNDLMLFDSNAEEYYSSEIKEIGSSFNDLDDSLISDLLLV</sequence>
<accession>Q9SUE3</accession>
<accession>B3LFA0</accession>